<sequence>MKKIGVLTSGGDAPGMNAAIRSVVRTGIYHGLDVVGIRRGYAGLIEGDFYLMDRGSVADIIQRGGTILLSARCEEFKTEEGRQKALKKMKEEGIEGLVVIGGDGSFRGAEKVSKELGIPAIGIPGTIDNDLACTDFTIGFDTAMNTIIDTINKIRDTATSHERTFVVETMGRRSGFLTLMAGLAGGAESILIPEIDFDLDDVSQKLKKGYERGKLHSIILVAEGVGDDFSTNRDINHSKAFVIGKQIAEKTGLETRVIILGHIQRGGSPTAMDRILASRMGSKAVELLLASESNKMVGYVNNKLVTCDISEALSKEKQVEKDVYKLANILSM</sequence>
<name>PFKA_HALOH</name>
<gene>
    <name evidence="1" type="primary">pfkA</name>
    <name type="ordered locus">Hore_03210</name>
</gene>
<reference key="1">
    <citation type="journal article" date="2009" name="PLoS ONE">
        <title>Genome analysis of the anaerobic thermohalophilic bacterium Halothermothrix orenii.</title>
        <authorList>
            <person name="Mavromatis K."/>
            <person name="Ivanova N."/>
            <person name="Anderson I."/>
            <person name="Lykidis A."/>
            <person name="Hooper S.D."/>
            <person name="Sun H."/>
            <person name="Kunin V."/>
            <person name="Lapidus A."/>
            <person name="Hugenholtz P."/>
            <person name="Patel B."/>
            <person name="Kyrpides N.C."/>
        </authorList>
    </citation>
    <scope>NUCLEOTIDE SEQUENCE [LARGE SCALE GENOMIC DNA]</scope>
    <source>
        <strain>H 168 / OCM 544 / DSM 9562</strain>
    </source>
</reference>
<feature type="chain" id="PRO_1000192374" description="ATP-dependent 6-phosphofructokinase">
    <location>
        <begin position="1"/>
        <end position="332"/>
    </location>
</feature>
<feature type="active site" description="Proton acceptor" evidence="1">
    <location>
        <position position="128"/>
    </location>
</feature>
<feature type="binding site" evidence="1">
    <location>
        <position position="11"/>
    </location>
    <ligand>
        <name>ATP</name>
        <dbReference type="ChEBI" id="CHEBI:30616"/>
    </ligand>
</feature>
<feature type="binding site" evidence="1">
    <location>
        <begin position="21"/>
        <end position="25"/>
    </location>
    <ligand>
        <name>ADP</name>
        <dbReference type="ChEBI" id="CHEBI:456216"/>
        <note>allosteric activator; ligand shared between dimeric partners</note>
    </ligand>
</feature>
<feature type="binding site" evidence="1">
    <location>
        <begin position="72"/>
        <end position="73"/>
    </location>
    <ligand>
        <name>ATP</name>
        <dbReference type="ChEBI" id="CHEBI:30616"/>
    </ligand>
</feature>
<feature type="binding site" evidence="1">
    <location>
        <begin position="102"/>
        <end position="105"/>
    </location>
    <ligand>
        <name>ATP</name>
        <dbReference type="ChEBI" id="CHEBI:30616"/>
    </ligand>
</feature>
<feature type="binding site" evidence="1">
    <location>
        <position position="103"/>
    </location>
    <ligand>
        <name>Mg(2+)</name>
        <dbReference type="ChEBI" id="CHEBI:18420"/>
        <note>catalytic</note>
    </ligand>
</feature>
<feature type="binding site" description="in other chain" evidence="1">
    <location>
        <begin position="126"/>
        <end position="128"/>
    </location>
    <ligand>
        <name>substrate</name>
        <note>ligand shared between dimeric partners</note>
    </ligand>
</feature>
<feature type="binding site" description="in other chain" evidence="1">
    <location>
        <position position="155"/>
    </location>
    <ligand>
        <name>ADP</name>
        <dbReference type="ChEBI" id="CHEBI:456216"/>
        <note>allosteric activator; ligand shared between dimeric partners</note>
    </ligand>
</feature>
<feature type="binding site" evidence="1">
    <location>
        <position position="163"/>
    </location>
    <ligand>
        <name>substrate</name>
        <note>ligand shared between dimeric partners</note>
    </ligand>
</feature>
<feature type="binding site" description="in other chain" evidence="1">
    <location>
        <begin position="170"/>
        <end position="172"/>
    </location>
    <ligand>
        <name>substrate</name>
        <note>ligand shared between dimeric partners</note>
    </ligand>
</feature>
<feature type="binding site" description="in other chain" evidence="1">
    <location>
        <begin position="186"/>
        <end position="188"/>
    </location>
    <ligand>
        <name>ADP</name>
        <dbReference type="ChEBI" id="CHEBI:456216"/>
        <note>allosteric activator; ligand shared between dimeric partners</note>
    </ligand>
</feature>
<feature type="binding site" description="in other chain" evidence="1">
    <location>
        <position position="212"/>
    </location>
    <ligand>
        <name>ADP</name>
        <dbReference type="ChEBI" id="CHEBI:456216"/>
        <note>allosteric activator; ligand shared between dimeric partners</note>
    </ligand>
</feature>
<feature type="binding site" description="in other chain" evidence="1">
    <location>
        <begin position="214"/>
        <end position="216"/>
    </location>
    <ligand>
        <name>ADP</name>
        <dbReference type="ChEBI" id="CHEBI:456216"/>
        <note>allosteric activator; ligand shared between dimeric partners</note>
    </ligand>
</feature>
<feature type="binding site" description="in other chain" evidence="1">
    <location>
        <position position="223"/>
    </location>
    <ligand>
        <name>substrate</name>
        <note>ligand shared between dimeric partners</note>
    </ligand>
</feature>
<feature type="binding site" evidence="1">
    <location>
        <position position="256"/>
    </location>
    <ligand>
        <name>substrate</name>
        <note>ligand shared between dimeric partners</note>
    </ligand>
</feature>
<feature type="binding site" description="in other chain" evidence="1">
    <location>
        <begin position="262"/>
        <end position="265"/>
    </location>
    <ligand>
        <name>substrate</name>
        <note>ligand shared between dimeric partners</note>
    </ligand>
</feature>
<dbReference type="EC" id="2.7.1.11" evidence="1"/>
<dbReference type="EMBL" id="CP001098">
    <property type="protein sequence ID" value="ACL69082.1"/>
    <property type="molecule type" value="Genomic_DNA"/>
</dbReference>
<dbReference type="RefSeq" id="WP_012635270.1">
    <property type="nucleotide sequence ID" value="NC_011899.1"/>
</dbReference>
<dbReference type="SMR" id="B8D1K5"/>
<dbReference type="STRING" id="373903.Hore_03210"/>
<dbReference type="KEGG" id="hor:Hore_03210"/>
<dbReference type="eggNOG" id="COG0205">
    <property type="taxonomic scope" value="Bacteria"/>
</dbReference>
<dbReference type="HOGENOM" id="CLU_020655_0_1_9"/>
<dbReference type="OrthoDB" id="9802503at2"/>
<dbReference type="UniPathway" id="UPA00109">
    <property type="reaction ID" value="UER00182"/>
</dbReference>
<dbReference type="Proteomes" id="UP000000719">
    <property type="component" value="Chromosome"/>
</dbReference>
<dbReference type="GO" id="GO:0005945">
    <property type="term" value="C:6-phosphofructokinase complex"/>
    <property type="evidence" value="ECO:0007669"/>
    <property type="project" value="TreeGrafter"/>
</dbReference>
<dbReference type="GO" id="GO:0003872">
    <property type="term" value="F:6-phosphofructokinase activity"/>
    <property type="evidence" value="ECO:0007669"/>
    <property type="project" value="UniProtKB-UniRule"/>
</dbReference>
<dbReference type="GO" id="GO:0016208">
    <property type="term" value="F:AMP binding"/>
    <property type="evidence" value="ECO:0007669"/>
    <property type="project" value="TreeGrafter"/>
</dbReference>
<dbReference type="GO" id="GO:0005524">
    <property type="term" value="F:ATP binding"/>
    <property type="evidence" value="ECO:0007669"/>
    <property type="project" value="UniProtKB-KW"/>
</dbReference>
<dbReference type="GO" id="GO:0070095">
    <property type="term" value="F:fructose-6-phosphate binding"/>
    <property type="evidence" value="ECO:0007669"/>
    <property type="project" value="TreeGrafter"/>
</dbReference>
<dbReference type="GO" id="GO:0042802">
    <property type="term" value="F:identical protein binding"/>
    <property type="evidence" value="ECO:0007669"/>
    <property type="project" value="TreeGrafter"/>
</dbReference>
<dbReference type="GO" id="GO:0046872">
    <property type="term" value="F:metal ion binding"/>
    <property type="evidence" value="ECO:0007669"/>
    <property type="project" value="UniProtKB-KW"/>
</dbReference>
<dbReference type="GO" id="GO:0048029">
    <property type="term" value="F:monosaccharide binding"/>
    <property type="evidence" value="ECO:0007669"/>
    <property type="project" value="TreeGrafter"/>
</dbReference>
<dbReference type="GO" id="GO:0061621">
    <property type="term" value="P:canonical glycolysis"/>
    <property type="evidence" value="ECO:0007669"/>
    <property type="project" value="TreeGrafter"/>
</dbReference>
<dbReference type="GO" id="GO:0030388">
    <property type="term" value="P:fructose 1,6-bisphosphate metabolic process"/>
    <property type="evidence" value="ECO:0007669"/>
    <property type="project" value="TreeGrafter"/>
</dbReference>
<dbReference type="GO" id="GO:0006002">
    <property type="term" value="P:fructose 6-phosphate metabolic process"/>
    <property type="evidence" value="ECO:0007669"/>
    <property type="project" value="InterPro"/>
</dbReference>
<dbReference type="FunFam" id="3.40.50.450:FF:000001">
    <property type="entry name" value="ATP-dependent 6-phosphofructokinase"/>
    <property type="match status" value="1"/>
</dbReference>
<dbReference type="FunFam" id="3.40.50.460:FF:000002">
    <property type="entry name" value="ATP-dependent 6-phosphofructokinase"/>
    <property type="match status" value="1"/>
</dbReference>
<dbReference type="Gene3D" id="3.40.50.450">
    <property type="match status" value="1"/>
</dbReference>
<dbReference type="Gene3D" id="3.40.50.460">
    <property type="entry name" value="Phosphofructokinase domain"/>
    <property type="match status" value="1"/>
</dbReference>
<dbReference type="HAMAP" id="MF_00339">
    <property type="entry name" value="Phosphofructokinase_I_B1"/>
    <property type="match status" value="1"/>
</dbReference>
<dbReference type="InterPro" id="IPR022953">
    <property type="entry name" value="ATP_PFK"/>
</dbReference>
<dbReference type="InterPro" id="IPR012003">
    <property type="entry name" value="ATP_PFK_prok-type"/>
</dbReference>
<dbReference type="InterPro" id="IPR012828">
    <property type="entry name" value="PFKA_ATP_prok"/>
</dbReference>
<dbReference type="InterPro" id="IPR015912">
    <property type="entry name" value="Phosphofructokinase_CS"/>
</dbReference>
<dbReference type="InterPro" id="IPR000023">
    <property type="entry name" value="Phosphofructokinase_dom"/>
</dbReference>
<dbReference type="InterPro" id="IPR035966">
    <property type="entry name" value="PKF_sf"/>
</dbReference>
<dbReference type="NCBIfam" id="TIGR02482">
    <property type="entry name" value="PFKA_ATP"/>
    <property type="match status" value="1"/>
</dbReference>
<dbReference type="NCBIfam" id="NF002872">
    <property type="entry name" value="PRK03202.1"/>
    <property type="match status" value="1"/>
</dbReference>
<dbReference type="PANTHER" id="PTHR13697:SF4">
    <property type="entry name" value="ATP-DEPENDENT 6-PHOSPHOFRUCTOKINASE"/>
    <property type="match status" value="1"/>
</dbReference>
<dbReference type="PANTHER" id="PTHR13697">
    <property type="entry name" value="PHOSPHOFRUCTOKINASE"/>
    <property type="match status" value="1"/>
</dbReference>
<dbReference type="Pfam" id="PF00365">
    <property type="entry name" value="PFK"/>
    <property type="match status" value="1"/>
</dbReference>
<dbReference type="PIRSF" id="PIRSF000532">
    <property type="entry name" value="ATP_PFK_prok"/>
    <property type="match status" value="1"/>
</dbReference>
<dbReference type="PRINTS" id="PR00476">
    <property type="entry name" value="PHFRCTKINASE"/>
</dbReference>
<dbReference type="SUPFAM" id="SSF53784">
    <property type="entry name" value="Phosphofructokinase"/>
    <property type="match status" value="1"/>
</dbReference>
<dbReference type="PROSITE" id="PS00433">
    <property type="entry name" value="PHOSPHOFRUCTOKINASE"/>
    <property type="match status" value="1"/>
</dbReference>
<accession>B8D1K5</accession>
<comment type="function">
    <text evidence="1">Catalyzes the phosphorylation of D-fructose 6-phosphate to fructose 1,6-bisphosphate by ATP, the first committing step of glycolysis.</text>
</comment>
<comment type="catalytic activity">
    <reaction evidence="1">
        <text>beta-D-fructose 6-phosphate + ATP = beta-D-fructose 1,6-bisphosphate + ADP + H(+)</text>
        <dbReference type="Rhea" id="RHEA:16109"/>
        <dbReference type="ChEBI" id="CHEBI:15378"/>
        <dbReference type="ChEBI" id="CHEBI:30616"/>
        <dbReference type="ChEBI" id="CHEBI:32966"/>
        <dbReference type="ChEBI" id="CHEBI:57634"/>
        <dbReference type="ChEBI" id="CHEBI:456216"/>
        <dbReference type="EC" id="2.7.1.11"/>
    </reaction>
</comment>
<comment type="cofactor">
    <cofactor evidence="1">
        <name>Mg(2+)</name>
        <dbReference type="ChEBI" id="CHEBI:18420"/>
    </cofactor>
</comment>
<comment type="activity regulation">
    <text evidence="1">Allosterically activated by ADP and other diphosphonucleosides, and allosterically inhibited by phosphoenolpyruvate.</text>
</comment>
<comment type="pathway">
    <text evidence="1">Carbohydrate degradation; glycolysis; D-glyceraldehyde 3-phosphate and glycerone phosphate from D-glucose: step 3/4.</text>
</comment>
<comment type="subunit">
    <text evidence="1">Homotetramer.</text>
</comment>
<comment type="subcellular location">
    <subcellularLocation>
        <location evidence="1">Cytoplasm</location>
    </subcellularLocation>
</comment>
<comment type="similarity">
    <text evidence="1">Belongs to the phosphofructokinase type A (PFKA) family. ATP-dependent PFK group I subfamily. Prokaryotic clade 'B1' sub-subfamily.</text>
</comment>
<proteinExistence type="inferred from homology"/>
<evidence type="ECO:0000255" key="1">
    <source>
        <dbReference type="HAMAP-Rule" id="MF_00339"/>
    </source>
</evidence>
<protein>
    <recommendedName>
        <fullName evidence="1">ATP-dependent 6-phosphofructokinase</fullName>
        <shortName evidence="1">ATP-PFK</shortName>
        <shortName evidence="1">Phosphofructokinase</shortName>
        <ecNumber evidence="1">2.7.1.11</ecNumber>
    </recommendedName>
    <alternativeName>
        <fullName evidence="1">Phosphohexokinase</fullName>
    </alternativeName>
</protein>
<keyword id="KW-0021">Allosteric enzyme</keyword>
<keyword id="KW-0067">ATP-binding</keyword>
<keyword id="KW-0963">Cytoplasm</keyword>
<keyword id="KW-0324">Glycolysis</keyword>
<keyword id="KW-0418">Kinase</keyword>
<keyword id="KW-0460">Magnesium</keyword>
<keyword id="KW-0479">Metal-binding</keyword>
<keyword id="KW-0547">Nucleotide-binding</keyword>
<keyword id="KW-1185">Reference proteome</keyword>
<keyword id="KW-0808">Transferase</keyword>
<organism>
    <name type="scientific">Halothermothrix orenii (strain H 168 / OCM 544 / DSM 9562)</name>
    <dbReference type="NCBI Taxonomy" id="373903"/>
    <lineage>
        <taxon>Bacteria</taxon>
        <taxon>Bacillati</taxon>
        <taxon>Bacillota</taxon>
        <taxon>Clostridia</taxon>
        <taxon>Halanaerobiales</taxon>
        <taxon>Halothermotrichaceae</taxon>
        <taxon>Halothermothrix</taxon>
    </lineage>
</organism>